<reference key="1">
    <citation type="journal article" date="2008" name="J. Bacteriol.">
        <title>The complete genome sequence of Actinobacillus pleuropneumoniae L20 (serotype 5b).</title>
        <authorList>
            <person name="Foote S.J."/>
            <person name="Bosse J.T."/>
            <person name="Bouevitch A.B."/>
            <person name="Langford P.R."/>
            <person name="Young N.M."/>
            <person name="Nash J.H.E."/>
        </authorList>
    </citation>
    <scope>NUCLEOTIDE SEQUENCE [LARGE SCALE GENOMIC DNA]</scope>
    <source>
        <strain>L20</strain>
    </source>
</reference>
<proteinExistence type="inferred from homology"/>
<name>RLME_ACTP2</name>
<dbReference type="EC" id="2.1.1.166" evidence="1"/>
<dbReference type="EMBL" id="CP000569">
    <property type="protein sequence ID" value="ABN73696.1"/>
    <property type="molecule type" value="Genomic_DNA"/>
</dbReference>
<dbReference type="RefSeq" id="WP_005596838.1">
    <property type="nucleotide sequence ID" value="NC_009053.1"/>
</dbReference>
<dbReference type="SMR" id="A3MZW0"/>
<dbReference type="STRING" id="416269.APL_0594"/>
<dbReference type="EnsemblBacteria" id="ABN73696">
    <property type="protein sequence ID" value="ABN73696"/>
    <property type="gene ID" value="APL_0594"/>
</dbReference>
<dbReference type="GeneID" id="48598783"/>
<dbReference type="KEGG" id="apl:APL_0594"/>
<dbReference type="eggNOG" id="COG0293">
    <property type="taxonomic scope" value="Bacteria"/>
</dbReference>
<dbReference type="HOGENOM" id="CLU_009422_4_0_6"/>
<dbReference type="Proteomes" id="UP000001432">
    <property type="component" value="Chromosome"/>
</dbReference>
<dbReference type="GO" id="GO:0005737">
    <property type="term" value="C:cytoplasm"/>
    <property type="evidence" value="ECO:0007669"/>
    <property type="project" value="UniProtKB-SubCell"/>
</dbReference>
<dbReference type="GO" id="GO:0008650">
    <property type="term" value="F:rRNA (uridine-2'-O-)-methyltransferase activity"/>
    <property type="evidence" value="ECO:0007669"/>
    <property type="project" value="UniProtKB-UniRule"/>
</dbReference>
<dbReference type="FunFam" id="3.40.50.150:FF:000005">
    <property type="entry name" value="Ribosomal RNA large subunit methyltransferase E"/>
    <property type="match status" value="1"/>
</dbReference>
<dbReference type="Gene3D" id="3.40.50.150">
    <property type="entry name" value="Vaccinia Virus protein VP39"/>
    <property type="match status" value="1"/>
</dbReference>
<dbReference type="HAMAP" id="MF_01547">
    <property type="entry name" value="RNA_methyltr_E"/>
    <property type="match status" value="1"/>
</dbReference>
<dbReference type="InterPro" id="IPR050082">
    <property type="entry name" value="RNA_methyltr_RlmE"/>
</dbReference>
<dbReference type="InterPro" id="IPR002877">
    <property type="entry name" value="RNA_MeTrfase_FtsJ_dom"/>
</dbReference>
<dbReference type="InterPro" id="IPR015507">
    <property type="entry name" value="rRNA-MeTfrase_E"/>
</dbReference>
<dbReference type="InterPro" id="IPR004512">
    <property type="entry name" value="rRNA_MeTrfase_gammaproteobac"/>
</dbReference>
<dbReference type="InterPro" id="IPR029063">
    <property type="entry name" value="SAM-dependent_MTases_sf"/>
</dbReference>
<dbReference type="NCBIfam" id="NF008390">
    <property type="entry name" value="PRK11188.1"/>
    <property type="match status" value="1"/>
</dbReference>
<dbReference type="NCBIfam" id="TIGR00438">
    <property type="entry name" value="rrmJ"/>
    <property type="match status" value="1"/>
</dbReference>
<dbReference type="PANTHER" id="PTHR10920">
    <property type="entry name" value="RIBOSOMAL RNA METHYLTRANSFERASE"/>
    <property type="match status" value="1"/>
</dbReference>
<dbReference type="PANTHER" id="PTHR10920:SF18">
    <property type="entry name" value="RRNA METHYLTRANSFERASE 2, MITOCHONDRIAL"/>
    <property type="match status" value="1"/>
</dbReference>
<dbReference type="Pfam" id="PF01728">
    <property type="entry name" value="FtsJ"/>
    <property type="match status" value="1"/>
</dbReference>
<dbReference type="PIRSF" id="PIRSF005461">
    <property type="entry name" value="23S_rRNA_mtase"/>
    <property type="match status" value="1"/>
</dbReference>
<dbReference type="SUPFAM" id="SSF53335">
    <property type="entry name" value="S-adenosyl-L-methionine-dependent methyltransferases"/>
    <property type="match status" value="1"/>
</dbReference>
<accession>A3MZW0</accession>
<organism>
    <name type="scientific">Actinobacillus pleuropneumoniae serotype 5b (strain L20)</name>
    <dbReference type="NCBI Taxonomy" id="416269"/>
    <lineage>
        <taxon>Bacteria</taxon>
        <taxon>Pseudomonadati</taxon>
        <taxon>Pseudomonadota</taxon>
        <taxon>Gammaproteobacteria</taxon>
        <taxon>Pasteurellales</taxon>
        <taxon>Pasteurellaceae</taxon>
        <taxon>Actinobacillus</taxon>
    </lineage>
</organism>
<evidence type="ECO:0000255" key="1">
    <source>
        <dbReference type="HAMAP-Rule" id="MF_01547"/>
    </source>
</evidence>
<comment type="function">
    <text evidence="1">Specifically methylates the uridine in position 2552 of 23S rRNA at the 2'-O position of the ribose in the fully assembled 50S ribosomal subunit.</text>
</comment>
<comment type="catalytic activity">
    <reaction evidence="1">
        <text>uridine(2552) in 23S rRNA + S-adenosyl-L-methionine = 2'-O-methyluridine(2552) in 23S rRNA + S-adenosyl-L-homocysteine + H(+)</text>
        <dbReference type="Rhea" id="RHEA:42720"/>
        <dbReference type="Rhea" id="RHEA-COMP:10202"/>
        <dbReference type="Rhea" id="RHEA-COMP:10203"/>
        <dbReference type="ChEBI" id="CHEBI:15378"/>
        <dbReference type="ChEBI" id="CHEBI:57856"/>
        <dbReference type="ChEBI" id="CHEBI:59789"/>
        <dbReference type="ChEBI" id="CHEBI:65315"/>
        <dbReference type="ChEBI" id="CHEBI:74478"/>
        <dbReference type="EC" id="2.1.1.166"/>
    </reaction>
</comment>
<comment type="subcellular location">
    <subcellularLocation>
        <location evidence="1">Cytoplasm</location>
    </subcellularLocation>
</comment>
<comment type="similarity">
    <text evidence="1">Belongs to the class I-like SAM-binding methyltransferase superfamily. RNA methyltransferase RlmE family.</text>
</comment>
<protein>
    <recommendedName>
        <fullName evidence="1">Ribosomal RNA large subunit methyltransferase E</fullName>
        <ecNumber evidence="1">2.1.1.166</ecNumber>
    </recommendedName>
    <alternativeName>
        <fullName evidence="1">23S rRNA Um2552 methyltransferase</fullName>
    </alternativeName>
    <alternativeName>
        <fullName evidence="1">rRNA (uridine-2'-O-)-methyltransferase</fullName>
    </alternativeName>
</protein>
<gene>
    <name evidence="1" type="primary">rlmE</name>
    <name evidence="1" type="synonym">ftsJ</name>
    <name evidence="1" type="synonym">rrmJ</name>
    <name type="ordered locus">APL_0594</name>
</gene>
<keyword id="KW-0963">Cytoplasm</keyword>
<keyword id="KW-0489">Methyltransferase</keyword>
<keyword id="KW-1185">Reference proteome</keyword>
<keyword id="KW-0698">rRNA processing</keyword>
<keyword id="KW-0949">S-adenosyl-L-methionine</keyword>
<keyword id="KW-0808">Transferase</keyword>
<feature type="chain" id="PRO_0000300586" description="Ribosomal RNA large subunit methyltransferase E">
    <location>
        <begin position="1"/>
        <end position="208"/>
    </location>
</feature>
<feature type="active site" description="Proton acceptor" evidence="1">
    <location>
        <position position="163"/>
    </location>
</feature>
<feature type="binding site" evidence="1">
    <location>
        <position position="62"/>
    </location>
    <ligand>
        <name>S-adenosyl-L-methionine</name>
        <dbReference type="ChEBI" id="CHEBI:59789"/>
    </ligand>
</feature>
<feature type="binding site" evidence="1">
    <location>
        <position position="64"/>
    </location>
    <ligand>
        <name>S-adenosyl-L-methionine</name>
        <dbReference type="ChEBI" id="CHEBI:59789"/>
    </ligand>
</feature>
<feature type="binding site" evidence="1">
    <location>
        <position position="82"/>
    </location>
    <ligand>
        <name>S-adenosyl-L-methionine</name>
        <dbReference type="ChEBI" id="CHEBI:59789"/>
    </ligand>
</feature>
<feature type="binding site" evidence="1">
    <location>
        <position position="98"/>
    </location>
    <ligand>
        <name>S-adenosyl-L-methionine</name>
        <dbReference type="ChEBI" id="CHEBI:59789"/>
    </ligand>
</feature>
<feature type="binding site" evidence="1">
    <location>
        <position position="123"/>
    </location>
    <ligand>
        <name>S-adenosyl-L-methionine</name>
        <dbReference type="ChEBI" id="CHEBI:59789"/>
    </ligand>
</feature>
<sequence length="208" mass="23410">MGRKRSASSSRWLAEHFKDQFVQKAHKQKLRSRAYFKLDEIQQTDRLFKPGMTVVDLGAAPGGWSQYAVTQIGSKGRIIACDILDMNPIVGVDFLQGDFREESVLNALLERVGDDMVDVVMSDMAPNFSGMPSVDIPRAMYLVELALDMCRQVLAPKGSFVVKVFQGEGFDDYLRDIRAMFTTVKVRKPEASRDRSREVYIVATGYKG</sequence>